<reference key="1">
    <citation type="journal article" date="2002" name="Proc. Natl. Acad. Sci. U.S.A.">
        <title>Extensive mosaic structure revealed by the complete genome sequence of uropathogenic Escherichia coli.</title>
        <authorList>
            <person name="Welch R.A."/>
            <person name="Burland V."/>
            <person name="Plunkett G. III"/>
            <person name="Redford P."/>
            <person name="Roesch P."/>
            <person name="Rasko D."/>
            <person name="Buckles E.L."/>
            <person name="Liou S.-R."/>
            <person name="Boutin A."/>
            <person name="Hackett J."/>
            <person name="Stroud D."/>
            <person name="Mayhew G.F."/>
            <person name="Rose D.J."/>
            <person name="Zhou S."/>
            <person name="Schwartz D.C."/>
            <person name="Perna N.T."/>
            <person name="Mobley H.L.T."/>
            <person name="Donnenberg M.S."/>
            <person name="Blattner F.R."/>
        </authorList>
    </citation>
    <scope>NUCLEOTIDE SEQUENCE [LARGE SCALE GENOMIC DNA]</scope>
    <source>
        <strain>CFT073 / ATCC 700928 / UPEC</strain>
    </source>
</reference>
<sequence length="456" mass="51543">MELSSLTAVSPVDGRYGDKVSALRGIFSEYGLLKFRVQVEVRWLQKLAAHAAIKEVPAFAADAIGYLDAIVASFSEEDAARIKTIERTTNHDVKAVEYFLKEKVAEIPELHAVSEFIHFACTSEDINNLSHALMLKTARDEVILPYWRQLIDGIKDLAVQYRDIPLLSRTHGQPATPSTIGKEMANVAYRMERQYRQLNQVEILGKINGAVGNYNAHIAAYPEVDWHQFSEEFVTSLGIQWNPYTTQIEPHDYIAELFDCVARFNTILIDFDRDVWGYIALNHFKQKTIAGEIGSSTMPHKVNPIDFENSEGNLGLSNAVLQHLASKLPVSRWQRDLTDSTVLRNLGVGIGYALIAYQSTLKGVSKLEVNRDHLLDELDHNWEVLAEPIQTVMRRYGIEKPYEKLKELTRGKRVDAEGMKQFIDGLALPEEEKARLKAMTPANYIGRAITMVDELK</sequence>
<proteinExistence type="inferred from homology"/>
<evidence type="ECO:0000250" key="1"/>
<evidence type="ECO:0000250" key="2">
    <source>
        <dbReference type="UniProtKB" id="P0AB89"/>
    </source>
</evidence>
<evidence type="ECO:0000305" key="3"/>
<protein>
    <recommendedName>
        <fullName>Adenylosuccinate lyase</fullName>
        <shortName>ASL</shortName>
        <ecNumber evidence="2">4.3.2.2</ecNumber>
    </recommendedName>
    <alternativeName>
        <fullName>Adenylosuccinase</fullName>
        <shortName>ASase</shortName>
    </alternativeName>
</protein>
<keyword id="KW-0007">Acetylation</keyword>
<keyword id="KW-0456">Lyase</keyword>
<keyword id="KW-0658">Purine biosynthesis</keyword>
<keyword id="KW-1185">Reference proteome</keyword>
<comment type="function">
    <text evidence="2">Catalyzes two reactions in de novo purine nucleotide biosynthesis. Catalyzes the breakdown of 5-aminoimidazole- (N-succinylocarboxamide) ribotide (SAICAR or 2-[5-amino-1-(5-phospho-beta-D-ribosyl)imidazole-4-carboxamido]succinate) to 5-aminoimidazole-4-carboxamide ribotide (AICAR or 5-amino-1-(5-phospho-beta-D-ribosyl)imidazole-4-carboxamide) and fumarate, and of adenylosuccinate (ADS or N(6)-(1,2-dicarboxyethyl)-AMP) to adenosine monophosphate (AMP) and fumarate.</text>
</comment>
<comment type="catalytic activity">
    <reaction evidence="2">
        <text>N(6)-(1,2-dicarboxyethyl)-AMP = fumarate + AMP</text>
        <dbReference type="Rhea" id="RHEA:16853"/>
        <dbReference type="ChEBI" id="CHEBI:29806"/>
        <dbReference type="ChEBI" id="CHEBI:57567"/>
        <dbReference type="ChEBI" id="CHEBI:456215"/>
        <dbReference type="EC" id="4.3.2.2"/>
    </reaction>
    <physiologicalReaction direction="left-to-right" evidence="2">
        <dbReference type="Rhea" id="RHEA:16854"/>
    </physiologicalReaction>
</comment>
<comment type="catalytic activity">
    <reaction evidence="2">
        <text>(2S)-2-[5-amino-1-(5-phospho-beta-D-ribosyl)imidazole-4-carboxamido]succinate = 5-amino-1-(5-phospho-beta-D-ribosyl)imidazole-4-carboxamide + fumarate</text>
        <dbReference type="Rhea" id="RHEA:23920"/>
        <dbReference type="ChEBI" id="CHEBI:29806"/>
        <dbReference type="ChEBI" id="CHEBI:58443"/>
        <dbReference type="ChEBI" id="CHEBI:58475"/>
        <dbReference type="EC" id="4.3.2.2"/>
    </reaction>
    <physiologicalReaction direction="left-to-right" evidence="2">
        <dbReference type="Rhea" id="RHEA:23921"/>
    </physiologicalReaction>
</comment>
<comment type="pathway">
    <text>Purine metabolism; AMP biosynthesis via de novo pathway; AMP from IMP: step 2/2.</text>
</comment>
<comment type="pathway">
    <text>Purine metabolism; IMP biosynthesis via de novo pathway; 5-amino-1-(5-phospho-D-ribosyl)imidazole-4-carboxamide from 5-amino-1-(5-phospho-D-ribosyl)imidazole-4-carboxylate: step 2/2.</text>
</comment>
<comment type="subunit">
    <text evidence="1">Homotetramer. Residues from neighboring subunits contribute catalytic and substrate-binding residues to each active site (By similarity).</text>
</comment>
<comment type="similarity">
    <text evidence="3">Belongs to the lyase 1 family. Adenylosuccinate lyase subfamily.</text>
</comment>
<name>PUR8_ECOL6</name>
<accession>P0AB90</accession>
<accession>P25739</accession>
<feature type="chain" id="PRO_0000137879" description="Adenylosuccinate lyase">
    <location>
        <begin position="1"/>
        <end position="456"/>
    </location>
</feature>
<feature type="active site" description="Proton donor/acceptor" evidence="2">
    <location>
        <position position="171"/>
    </location>
</feature>
<feature type="active site" description="Proton donor/acceptor" evidence="2">
    <location>
        <position position="295"/>
    </location>
</feature>
<feature type="binding site" evidence="2">
    <location>
        <begin position="15"/>
        <end position="16"/>
    </location>
    <ligand>
        <name>N(6)-(1,2-dicarboxyethyl)-AMP</name>
        <dbReference type="ChEBI" id="CHEBI:57567"/>
    </ligand>
</feature>
<feature type="binding site" evidence="2">
    <location>
        <begin position="90"/>
        <end position="92"/>
    </location>
    <ligand>
        <name>N(6)-(1,2-dicarboxyethyl)-AMP</name>
        <dbReference type="ChEBI" id="CHEBI:57567"/>
    </ligand>
</feature>
<feature type="binding site" evidence="2">
    <location>
        <begin position="122"/>
        <end position="123"/>
    </location>
    <ligand>
        <name>N(6)-(1,2-dicarboxyethyl)-AMP</name>
        <dbReference type="ChEBI" id="CHEBI:57567"/>
    </ligand>
</feature>
<feature type="binding site" evidence="2">
    <location>
        <position position="247"/>
    </location>
    <ligand>
        <name>N(6)-(1,2-dicarboxyethyl)-AMP</name>
        <dbReference type="ChEBI" id="CHEBI:57567"/>
    </ligand>
</feature>
<feature type="binding site" evidence="2">
    <location>
        <position position="296"/>
    </location>
    <ligand>
        <name>N(6)-(1,2-dicarboxyethyl)-AMP</name>
        <dbReference type="ChEBI" id="CHEBI:57567"/>
    </ligand>
</feature>
<feature type="binding site" evidence="2">
    <location>
        <begin position="301"/>
        <end position="303"/>
    </location>
    <ligand>
        <name>N(6)-(1,2-dicarboxyethyl)-AMP</name>
        <dbReference type="ChEBI" id="CHEBI:57567"/>
    </ligand>
</feature>
<feature type="binding site" evidence="2">
    <location>
        <position position="309"/>
    </location>
    <ligand>
        <name>N(6)-(1,2-dicarboxyethyl)-AMP</name>
        <dbReference type="ChEBI" id="CHEBI:57567"/>
    </ligand>
</feature>
<feature type="binding site" evidence="2">
    <location>
        <position position="335"/>
    </location>
    <ligand>
        <name>N(6)-(1,2-dicarboxyethyl)-AMP</name>
        <dbReference type="ChEBI" id="CHEBI:57567"/>
    </ligand>
</feature>
<feature type="binding site" evidence="2">
    <location>
        <begin position="340"/>
        <end position="344"/>
    </location>
    <ligand>
        <name>N(6)-(1,2-dicarboxyethyl)-AMP</name>
        <dbReference type="ChEBI" id="CHEBI:57567"/>
    </ligand>
</feature>
<feature type="modified residue" description="N6-acetyllysine" evidence="1">
    <location>
        <position position="94"/>
    </location>
</feature>
<feature type="modified residue" description="N6-acetyllysine" evidence="1">
    <location>
        <position position="366"/>
    </location>
</feature>
<dbReference type="EC" id="4.3.2.2" evidence="2"/>
<dbReference type="EMBL" id="AE014075">
    <property type="protein sequence ID" value="AAN79979.1"/>
    <property type="molecule type" value="Genomic_DNA"/>
</dbReference>
<dbReference type="RefSeq" id="WP_000423742.1">
    <property type="nucleotide sequence ID" value="NZ_CP051263.1"/>
</dbReference>
<dbReference type="SMR" id="P0AB90"/>
<dbReference type="STRING" id="199310.c1510"/>
<dbReference type="KEGG" id="ecc:c1510"/>
<dbReference type="eggNOG" id="COG0015">
    <property type="taxonomic scope" value="Bacteria"/>
</dbReference>
<dbReference type="HOGENOM" id="CLU_025566_2_0_6"/>
<dbReference type="BioCyc" id="ECOL199310:C1510-MONOMER"/>
<dbReference type="UniPathway" id="UPA00074">
    <property type="reaction ID" value="UER00132"/>
</dbReference>
<dbReference type="UniPathway" id="UPA00075">
    <property type="reaction ID" value="UER00336"/>
</dbReference>
<dbReference type="Proteomes" id="UP000001410">
    <property type="component" value="Chromosome"/>
</dbReference>
<dbReference type="GO" id="GO:0005829">
    <property type="term" value="C:cytosol"/>
    <property type="evidence" value="ECO:0007669"/>
    <property type="project" value="TreeGrafter"/>
</dbReference>
<dbReference type="GO" id="GO:0070626">
    <property type="term" value="F:(S)-2-(5-amino-1-(5-phospho-D-ribosyl)imidazole-4-carboxamido) succinate lyase (fumarate-forming) activity"/>
    <property type="evidence" value="ECO:0007669"/>
    <property type="project" value="RHEA"/>
</dbReference>
<dbReference type="GO" id="GO:0004018">
    <property type="term" value="F:N6-(1,2-dicarboxyethyl)AMP AMP-lyase (fumarate-forming) activity"/>
    <property type="evidence" value="ECO:0007669"/>
    <property type="project" value="InterPro"/>
</dbReference>
<dbReference type="GO" id="GO:0044208">
    <property type="term" value="P:'de novo' AMP biosynthetic process"/>
    <property type="evidence" value="ECO:0007669"/>
    <property type="project" value="UniProtKB-UniPathway"/>
</dbReference>
<dbReference type="GO" id="GO:0006189">
    <property type="term" value="P:'de novo' IMP biosynthetic process"/>
    <property type="evidence" value="ECO:0007669"/>
    <property type="project" value="UniProtKB-UniPathway"/>
</dbReference>
<dbReference type="CDD" id="cd01598">
    <property type="entry name" value="PurB"/>
    <property type="match status" value="1"/>
</dbReference>
<dbReference type="FunFam" id="1.10.275.10:FF:000003">
    <property type="entry name" value="Adenylosuccinate lyase"/>
    <property type="match status" value="1"/>
</dbReference>
<dbReference type="FunFam" id="1.10.40.30:FF:000004">
    <property type="entry name" value="Adenylosuccinate lyase"/>
    <property type="match status" value="1"/>
</dbReference>
<dbReference type="FunFam" id="1.20.200.10:FF:000004">
    <property type="entry name" value="Adenylosuccinate lyase"/>
    <property type="match status" value="1"/>
</dbReference>
<dbReference type="Gene3D" id="1.10.40.30">
    <property type="entry name" value="Fumarase/aspartase (C-terminal domain)"/>
    <property type="match status" value="1"/>
</dbReference>
<dbReference type="Gene3D" id="1.20.200.10">
    <property type="entry name" value="Fumarase/aspartase (Central domain)"/>
    <property type="match status" value="1"/>
</dbReference>
<dbReference type="Gene3D" id="1.10.275.10">
    <property type="entry name" value="Fumarase/aspartase (N-terminal domain)"/>
    <property type="match status" value="1"/>
</dbReference>
<dbReference type="InterPro" id="IPR024083">
    <property type="entry name" value="Fumarase/histidase_N"/>
</dbReference>
<dbReference type="InterPro" id="IPR020557">
    <property type="entry name" value="Fumarate_lyase_CS"/>
</dbReference>
<dbReference type="InterPro" id="IPR000362">
    <property type="entry name" value="Fumarate_lyase_fam"/>
</dbReference>
<dbReference type="InterPro" id="IPR022761">
    <property type="entry name" value="Fumarate_lyase_N"/>
</dbReference>
<dbReference type="InterPro" id="IPR008948">
    <property type="entry name" value="L-Aspartase-like"/>
</dbReference>
<dbReference type="InterPro" id="IPR004769">
    <property type="entry name" value="Pur_lyase"/>
</dbReference>
<dbReference type="InterPro" id="IPR047136">
    <property type="entry name" value="PurB_bact"/>
</dbReference>
<dbReference type="InterPro" id="IPR013539">
    <property type="entry name" value="PurB_C"/>
</dbReference>
<dbReference type="NCBIfam" id="NF006764">
    <property type="entry name" value="PRK09285.1"/>
    <property type="match status" value="1"/>
</dbReference>
<dbReference type="NCBIfam" id="TIGR00928">
    <property type="entry name" value="purB"/>
    <property type="match status" value="1"/>
</dbReference>
<dbReference type="PANTHER" id="PTHR43411">
    <property type="entry name" value="ADENYLOSUCCINATE LYASE"/>
    <property type="match status" value="1"/>
</dbReference>
<dbReference type="PANTHER" id="PTHR43411:SF1">
    <property type="entry name" value="ADENYLOSUCCINATE LYASE"/>
    <property type="match status" value="1"/>
</dbReference>
<dbReference type="Pfam" id="PF08328">
    <property type="entry name" value="ASL_C"/>
    <property type="match status" value="1"/>
</dbReference>
<dbReference type="Pfam" id="PF00206">
    <property type="entry name" value="Lyase_1"/>
    <property type="match status" value="1"/>
</dbReference>
<dbReference type="PRINTS" id="PR00149">
    <property type="entry name" value="FUMRATELYASE"/>
</dbReference>
<dbReference type="SUPFAM" id="SSF48557">
    <property type="entry name" value="L-aspartase-like"/>
    <property type="match status" value="1"/>
</dbReference>
<dbReference type="PROSITE" id="PS00163">
    <property type="entry name" value="FUMARATE_LYASES"/>
    <property type="match status" value="1"/>
</dbReference>
<gene>
    <name type="primary">purB</name>
    <name type="ordered locus">c1510</name>
</gene>
<organism>
    <name type="scientific">Escherichia coli O6:H1 (strain CFT073 / ATCC 700928 / UPEC)</name>
    <dbReference type="NCBI Taxonomy" id="199310"/>
    <lineage>
        <taxon>Bacteria</taxon>
        <taxon>Pseudomonadati</taxon>
        <taxon>Pseudomonadota</taxon>
        <taxon>Gammaproteobacteria</taxon>
        <taxon>Enterobacterales</taxon>
        <taxon>Enterobacteriaceae</taxon>
        <taxon>Escherichia</taxon>
    </lineage>
</organism>